<dbReference type="EMBL" id="CP000724">
    <property type="protein sequence ID" value="ABR47998.1"/>
    <property type="molecule type" value="Genomic_DNA"/>
</dbReference>
<dbReference type="RefSeq" id="WP_012063033.1">
    <property type="nucleotide sequence ID" value="NC_009633.1"/>
</dbReference>
<dbReference type="SMR" id="A6TP80"/>
<dbReference type="STRING" id="293826.Amet_1828"/>
<dbReference type="TCDB" id="2.A.59.1.5">
    <property type="family name" value="the arsenical resistance-3 (acr3) family"/>
</dbReference>
<dbReference type="KEGG" id="amt:Amet_1828"/>
<dbReference type="eggNOG" id="COG0798">
    <property type="taxonomic scope" value="Bacteria"/>
</dbReference>
<dbReference type="HOGENOM" id="CLU_022869_0_2_9"/>
<dbReference type="OrthoDB" id="9771457at2"/>
<dbReference type="Proteomes" id="UP000001572">
    <property type="component" value="Chromosome"/>
</dbReference>
<dbReference type="GO" id="GO:0005886">
    <property type="term" value="C:plasma membrane"/>
    <property type="evidence" value="ECO:0007669"/>
    <property type="project" value="UniProtKB-SubCell"/>
</dbReference>
<dbReference type="GO" id="GO:0015104">
    <property type="term" value="F:antimonite transmembrane transporter activity"/>
    <property type="evidence" value="ECO:0007669"/>
    <property type="project" value="TreeGrafter"/>
</dbReference>
<dbReference type="GO" id="GO:0015297">
    <property type="term" value="F:antiporter activity"/>
    <property type="evidence" value="ECO:0007669"/>
    <property type="project" value="InterPro"/>
</dbReference>
<dbReference type="GO" id="GO:0015105">
    <property type="term" value="F:arsenite transmembrane transporter activity"/>
    <property type="evidence" value="ECO:0007669"/>
    <property type="project" value="TreeGrafter"/>
</dbReference>
<dbReference type="GO" id="GO:0046685">
    <property type="term" value="P:response to arsenic-containing substance"/>
    <property type="evidence" value="ECO:0007669"/>
    <property type="project" value="UniProtKB-KW"/>
</dbReference>
<dbReference type="FunFam" id="1.20.1530.20:FF:000020">
    <property type="entry name" value="Arsenical-resistance membrane protein"/>
    <property type="match status" value="1"/>
</dbReference>
<dbReference type="Gene3D" id="1.20.1530.20">
    <property type="match status" value="1"/>
</dbReference>
<dbReference type="InterPro" id="IPR004706">
    <property type="entry name" value="Arsenical-R_Acr3"/>
</dbReference>
<dbReference type="InterPro" id="IPR002657">
    <property type="entry name" value="BilAc:Na_symport/Acr3"/>
</dbReference>
<dbReference type="InterPro" id="IPR038770">
    <property type="entry name" value="Na+/solute_symporter_sf"/>
</dbReference>
<dbReference type="NCBIfam" id="TIGR00832">
    <property type="entry name" value="acr3"/>
    <property type="match status" value="1"/>
</dbReference>
<dbReference type="PANTHER" id="PTHR43057:SF1">
    <property type="entry name" value="ARSENICAL-RESISTANCE PROTEIN 3"/>
    <property type="match status" value="1"/>
</dbReference>
<dbReference type="PANTHER" id="PTHR43057">
    <property type="entry name" value="ARSENITE EFFLUX TRANSPORTER"/>
    <property type="match status" value="1"/>
</dbReference>
<dbReference type="Pfam" id="PF01758">
    <property type="entry name" value="SBF"/>
    <property type="match status" value="1"/>
</dbReference>
<dbReference type="PIRSF" id="PIRSF005508">
    <property type="entry name" value="Acr3"/>
    <property type="match status" value="1"/>
</dbReference>
<protein>
    <recommendedName>
        <fullName>Arsenical-resistance protein Acr3</fullName>
    </recommendedName>
</protein>
<sequence length="357" mass="39433">MGNENVVHEGKGIGFFERYLTVWVAACIIVGVAIGQLLPAVPETLSRWEYAQVSIPVAILIWLMIYPMMLKIDFTSIVEATKKPKGIIVTCVTNWLIKPFTMYLIAAFFFKIVFQNLIPESLANDYLAGAVLLGAAPCTAMVFVWSHLTKGDPAYTLVQVAVNNIILLFAFTPIVAILLGITDVIVPYDTLFLSVVLFIVIPLVGGYLSRKYIVQSKGIEYFENVFLKKFDNVTIVGLLLTLIIIFTFQAEVILSNPLHVLLIAVPLTIQTFFIFFLAYGWSKAWKLPHNVASPAGMIGASNFFELAVAVAITLFGLNSGATLATVVGVLVEVPVMLTLVKISNRTRHWFPEVAREN</sequence>
<gene>
    <name type="primary">acr3</name>
    <name type="ordered locus">Amet_1828</name>
</gene>
<evidence type="ECO:0000255" key="1"/>
<evidence type="ECO:0000269" key="2">
    <source>
    </source>
</evidence>
<evidence type="ECO:0000305" key="3"/>
<feature type="chain" id="PRO_0000430360" description="Arsenical-resistance protein Acr3">
    <location>
        <begin position="1"/>
        <end position="357"/>
    </location>
</feature>
<feature type="topological domain" description="Cytoplasmic" evidence="1">
    <location>
        <begin position="1"/>
        <end position="21"/>
    </location>
</feature>
<feature type="transmembrane region" description="Helical" evidence="1">
    <location>
        <begin position="22"/>
        <end position="42"/>
    </location>
</feature>
<feature type="topological domain" description="Extracellular" evidence="1">
    <location>
        <begin position="43"/>
        <end position="49"/>
    </location>
</feature>
<feature type="transmembrane region" description="Helical" evidence="1">
    <location>
        <begin position="50"/>
        <end position="70"/>
    </location>
</feature>
<feature type="topological domain" description="Cytoplasmic" evidence="1">
    <location>
        <begin position="71"/>
        <end position="93"/>
    </location>
</feature>
<feature type="transmembrane region" description="Helical" evidence="1">
    <location>
        <begin position="94"/>
        <end position="114"/>
    </location>
</feature>
<feature type="topological domain" description="Extracellular" evidence="1">
    <location>
        <begin position="115"/>
        <end position="125"/>
    </location>
</feature>
<feature type="transmembrane region" description="Helical" evidence="1">
    <location>
        <begin position="126"/>
        <end position="146"/>
    </location>
</feature>
<feature type="topological domain" description="Cytoplasmic" evidence="1">
    <location>
        <begin position="147"/>
        <end position="164"/>
    </location>
</feature>
<feature type="transmembrane region" description="Helical" evidence="1">
    <location>
        <begin position="165"/>
        <end position="185"/>
    </location>
</feature>
<feature type="topological domain" description="Extracellular" evidence="1">
    <location>
        <begin position="186"/>
        <end position="187"/>
    </location>
</feature>
<feature type="transmembrane region" description="Helical" evidence="1">
    <location>
        <begin position="188"/>
        <end position="208"/>
    </location>
</feature>
<feature type="topological domain" description="Cytoplasmic" evidence="1">
    <location>
        <begin position="209"/>
        <end position="232"/>
    </location>
</feature>
<feature type="transmembrane region" description="Helical" evidence="1">
    <location>
        <begin position="233"/>
        <end position="253"/>
    </location>
</feature>
<feature type="topological domain" description="Extracellular" evidence="1">
    <location>
        <begin position="254"/>
        <end position="259"/>
    </location>
</feature>
<feature type="transmembrane region" description="Helical" evidence="1">
    <location>
        <begin position="260"/>
        <end position="280"/>
    </location>
</feature>
<feature type="topological domain" description="Cytoplasmic" evidence="1">
    <location>
        <begin position="281"/>
        <end position="296"/>
    </location>
</feature>
<feature type="transmembrane region" description="Helical" evidence="1">
    <location>
        <begin position="297"/>
        <end position="317"/>
    </location>
</feature>
<feature type="topological domain" description="Extracellular" evidence="1">
    <location>
        <begin position="318"/>
        <end position="319"/>
    </location>
</feature>
<feature type="transmembrane region" description="Helical" evidence="1">
    <location>
        <begin position="320"/>
        <end position="340"/>
    </location>
</feature>
<feature type="topological domain" description="Cytoplasmic" evidence="1">
    <location>
        <begin position="341"/>
        <end position="357"/>
    </location>
</feature>
<feature type="mutagenesis site" description="Decrease in transport activity." evidence="2">
    <original>C</original>
    <variation>S</variation>
    <location>
        <position position="27"/>
    </location>
</feature>
<feature type="mutagenesis site" description="Does not affect transport activity." evidence="2">
    <original>C</original>
    <variation>S</variation>
    <location>
        <position position="91"/>
    </location>
</feature>
<feature type="mutagenesis site" description="Loss of transport activity." evidence="2">
    <original>C</original>
    <variation>A</variation>
    <variation>S</variation>
    <location>
        <position position="138"/>
    </location>
</feature>
<comment type="function">
    <text evidence="2">Catalyzes arsenite efflux from the cell.</text>
</comment>
<comment type="subcellular location">
    <subcellularLocation>
        <location evidence="2">Cell membrane</location>
        <topology evidence="2">Multi-pass membrane protein</topology>
    </subcellularLocation>
</comment>
<comment type="similarity">
    <text evidence="3">Belongs to the arsenical resistance-3 (ACR3) (TC 2.A.59) family.</text>
</comment>
<proteinExistence type="evidence at protein level"/>
<keyword id="KW-0059">Arsenical resistance</keyword>
<keyword id="KW-1003">Cell membrane</keyword>
<keyword id="KW-0472">Membrane</keyword>
<keyword id="KW-1185">Reference proteome</keyword>
<keyword id="KW-0812">Transmembrane</keyword>
<keyword id="KW-1133">Transmembrane helix</keyword>
<keyword id="KW-0813">Transport</keyword>
<reference key="1">
    <citation type="journal article" date="2016" name="Genome Announc.">
        <title>Complete genome sequence of Alkaliphilus metalliredigens strain QYMF, an alkaliphilic and metal-reducing bacterium isolated from borax-contaminated leachate ponds.</title>
        <authorList>
            <person name="Hwang C."/>
            <person name="Copeland A."/>
            <person name="Lucas S."/>
            <person name="Lapidus A."/>
            <person name="Barry K."/>
            <person name="Detter J.C."/>
            <person name="Glavina Del Rio T."/>
            <person name="Hammon N."/>
            <person name="Israni S."/>
            <person name="Dalin E."/>
            <person name="Tice H."/>
            <person name="Pitluck S."/>
            <person name="Chertkov O."/>
            <person name="Brettin T."/>
            <person name="Bruce D."/>
            <person name="Han C."/>
            <person name="Schmutz J."/>
            <person name="Larimer F."/>
            <person name="Land M.L."/>
            <person name="Hauser L."/>
            <person name="Kyrpides N."/>
            <person name="Mikhailova N."/>
            <person name="Ye Q."/>
            <person name="Zhou J."/>
            <person name="Richardson P."/>
            <person name="Fields M.W."/>
        </authorList>
    </citation>
    <scope>NUCLEOTIDE SEQUENCE [LARGE SCALE GENOMIC DNA]</scope>
    <source>
        <strain>QYMF</strain>
    </source>
</reference>
<reference key="2">
    <citation type="journal article" date="2009" name="J. Biol. Chem.">
        <title>Properties of arsenite efflux permeases (Acr3) from Alkaliphilus metalliredigens and Corynebacterium glutamicum.</title>
        <authorList>
            <person name="Fu H.L."/>
            <person name="Meng Y."/>
            <person name="Ordonez E."/>
            <person name="Villadangos A.F."/>
            <person name="Bhattacharjee H."/>
            <person name="Gil J.A."/>
            <person name="Mateos L.M."/>
            <person name="Rosen B.P."/>
        </authorList>
    </citation>
    <scope>FUNCTION</scope>
    <scope>SUBCELLULAR LOCATION</scope>
    <scope>TOPOLOGY</scope>
    <scope>MUTAGENESIS OF CYS-27; CYS-91 AND CYS-138</scope>
    <source>
        <strain>QYMF</strain>
    </source>
</reference>
<organism>
    <name type="scientific">Alkaliphilus metalliredigens (strain QYMF)</name>
    <dbReference type="NCBI Taxonomy" id="293826"/>
    <lineage>
        <taxon>Bacteria</taxon>
        <taxon>Bacillati</taxon>
        <taxon>Bacillota</taxon>
        <taxon>Clostridia</taxon>
        <taxon>Peptostreptococcales</taxon>
        <taxon>Natronincolaceae</taxon>
        <taxon>Alkaliphilus</taxon>
    </lineage>
</organism>
<accession>A6TP80</accession>
<name>ACR3_ALKMQ</name>